<feature type="chain" id="PRO_0000452058" description="Peptide chaperone MftB">
    <location>
        <begin position="1"/>
        <end position="102"/>
    </location>
</feature>
<comment type="function">
    <text evidence="1 2 3">Peptide chaperone involved in the biosynthesis of the enzyme cofactor mycofactocin (MFT). Binds MftA and MftC with high affinity, and is essential for MftC activity on MftA, likely via the formation of a ternary complex (By similarity) (PubMed:27158836). Is required for the in vivo ethanol assimilation in M.smegmatis (PubMed:31113891).</text>
</comment>
<comment type="disruption phenotype">
    <text evidence="3">Cells lacking this gene lose the ability to utilize ethanol as the sole growth substrate.</text>
</comment>
<comment type="similarity">
    <text evidence="5">Belongs to the peptide chaperone MftB family.</text>
</comment>
<gene>
    <name evidence="4" type="primary">mftB</name>
    <name evidence="6" type="ordered locus">MSMEG_1422</name>
</gene>
<organism>
    <name type="scientific">Mycolicibacterium smegmatis (strain ATCC 700084 / mc(2)155)</name>
    <name type="common">Mycobacterium smegmatis</name>
    <dbReference type="NCBI Taxonomy" id="246196"/>
    <lineage>
        <taxon>Bacteria</taxon>
        <taxon>Bacillati</taxon>
        <taxon>Actinomycetota</taxon>
        <taxon>Actinomycetes</taxon>
        <taxon>Mycobacteriales</taxon>
        <taxon>Mycobacteriaceae</taxon>
        <taxon>Mycolicibacterium</taxon>
    </lineage>
</organism>
<sequence length="102" mass="11134">MSTQVAEQITFDPDVSWRLHHQVAVRPEPFGALLYHFGTRKLSFLKNRTVVEVVNSLADHPDARSALCAAGVADDQQAPYLHALGVLVQSNMLVPGNPEGSQ</sequence>
<name>MFTB_MYCS2</name>
<proteinExistence type="inferred from homology"/>
<protein>
    <recommendedName>
        <fullName evidence="5">Peptide chaperone MftB</fullName>
    </recommendedName>
</protein>
<accession>A0QSB7</accession>
<dbReference type="EMBL" id="CP000480">
    <property type="protein sequence ID" value="ABK73646.1"/>
    <property type="molecule type" value="Genomic_DNA"/>
</dbReference>
<dbReference type="RefSeq" id="WP_003892808.1">
    <property type="nucleotide sequence ID" value="NZ_SIJM01000016.1"/>
</dbReference>
<dbReference type="RefSeq" id="YP_885805.1">
    <property type="nucleotide sequence ID" value="NC_008596.1"/>
</dbReference>
<dbReference type="SMR" id="A0QSB7"/>
<dbReference type="STRING" id="246196.MSMEG_1422"/>
<dbReference type="PaxDb" id="246196-MSMEI_1387"/>
<dbReference type="GeneID" id="93456266"/>
<dbReference type="KEGG" id="msb:LJ00_07090"/>
<dbReference type="KEGG" id="msm:MSMEG_1422"/>
<dbReference type="PATRIC" id="fig|246196.19.peg.1409"/>
<dbReference type="eggNOG" id="COG0535">
    <property type="taxonomic scope" value="Bacteria"/>
</dbReference>
<dbReference type="OrthoDB" id="3784885at2"/>
<dbReference type="Proteomes" id="UP000000757">
    <property type="component" value="Chromosome"/>
</dbReference>
<dbReference type="InterPro" id="IPR023850">
    <property type="entry name" value="MftB"/>
</dbReference>
<dbReference type="NCBIfam" id="TIGR03967">
    <property type="entry name" value="mycofact_MftB"/>
    <property type="match status" value="1"/>
</dbReference>
<evidence type="ECO:0000250" key="1">
    <source>
        <dbReference type="UniProtKB" id="A0PM48"/>
    </source>
</evidence>
<evidence type="ECO:0000269" key="2">
    <source>
    </source>
</evidence>
<evidence type="ECO:0000269" key="3">
    <source>
    </source>
</evidence>
<evidence type="ECO:0000303" key="4">
    <source>
    </source>
</evidence>
<evidence type="ECO:0000305" key="5"/>
<evidence type="ECO:0000312" key="6">
    <source>
        <dbReference type="EMBL" id="ABK73646.1"/>
    </source>
</evidence>
<reference key="1">
    <citation type="submission" date="2006-10" db="EMBL/GenBank/DDBJ databases">
        <authorList>
            <person name="Fleischmann R.D."/>
            <person name="Dodson R.J."/>
            <person name="Haft D.H."/>
            <person name="Merkel J.S."/>
            <person name="Nelson W.C."/>
            <person name="Fraser C.M."/>
        </authorList>
    </citation>
    <scope>NUCLEOTIDE SEQUENCE [LARGE SCALE GENOMIC DNA]</scope>
    <source>
        <strain>ATCC 700084 / mc(2)155</strain>
    </source>
</reference>
<reference key="2">
    <citation type="journal article" date="2016" name="Biochemistry">
        <title>The Radical S-Adenosyl-L-methionine Enzyme MftC Catalyzes an Oxidative Decarboxylation of the C-Terminus of the MftA Peptide.</title>
        <authorList>
            <person name="Bruender N.A."/>
            <person name="Bandarian V."/>
        </authorList>
    </citation>
    <scope>FUNCTION</scope>
    <source>
        <strain>ATCC 700084 / mc(2)155</strain>
    </source>
</reference>
<reference key="3">
    <citation type="journal article" date="2019" name="MBio">
        <title>Mycofactocin Is Associated with Ethanol Metabolism in Mycobacteria.</title>
        <authorList>
            <person name="Krishnamoorthy G."/>
            <person name="Kaiser P."/>
            <person name="Lozza L."/>
            <person name="Hahnke K."/>
            <person name="Mollenkopf H.J."/>
            <person name="Kaufmann S.H.E."/>
        </authorList>
    </citation>
    <scope>FUNCTION</scope>
    <scope>DISRUPTION PHENOTYPE</scope>
    <source>
        <strain>ATCC 700084 / mc(2)155</strain>
    </source>
</reference>
<keyword id="KW-1185">Reference proteome</keyword>